<accession>A5G9J7</accession>
<evidence type="ECO:0000255" key="1">
    <source>
        <dbReference type="HAMAP-Rule" id="MF_01678"/>
    </source>
</evidence>
<evidence type="ECO:0000305" key="2"/>
<comment type="function">
    <text evidence="1">Catalyzes the interconversion of methylthioribose-1-phosphate (MTR-1-P) into methylthioribulose-1-phosphate (MTRu-1-P).</text>
</comment>
<comment type="catalytic activity">
    <reaction evidence="1">
        <text>5-(methylsulfanyl)-alpha-D-ribose 1-phosphate = 5-(methylsulfanyl)-D-ribulose 1-phosphate</text>
        <dbReference type="Rhea" id="RHEA:19989"/>
        <dbReference type="ChEBI" id="CHEBI:58533"/>
        <dbReference type="ChEBI" id="CHEBI:58548"/>
        <dbReference type="EC" id="5.3.1.23"/>
    </reaction>
</comment>
<comment type="pathway">
    <text evidence="1">Amino-acid biosynthesis; L-methionine biosynthesis via salvage pathway; L-methionine from S-methyl-5-thio-alpha-D-ribose 1-phosphate: step 1/6.</text>
</comment>
<comment type="similarity">
    <text evidence="2">Belongs to the eIF-2B alpha/beta/delta subunits family. MtnA subfamily.</text>
</comment>
<reference key="1">
    <citation type="submission" date="2007-05" db="EMBL/GenBank/DDBJ databases">
        <title>Complete sequence of Geobacter uraniireducens Rf4.</title>
        <authorList>
            <consortium name="US DOE Joint Genome Institute"/>
            <person name="Copeland A."/>
            <person name="Lucas S."/>
            <person name="Lapidus A."/>
            <person name="Barry K."/>
            <person name="Detter J.C."/>
            <person name="Glavina del Rio T."/>
            <person name="Hammon N."/>
            <person name="Israni S."/>
            <person name="Dalin E."/>
            <person name="Tice H."/>
            <person name="Pitluck S."/>
            <person name="Chertkov O."/>
            <person name="Brettin T."/>
            <person name="Bruce D."/>
            <person name="Han C."/>
            <person name="Schmutz J."/>
            <person name="Larimer F."/>
            <person name="Land M."/>
            <person name="Hauser L."/>
            <person name="Kyrpides N."/>
            <person name="Mikhailova N."/>
            <person name="Shelobolina E."/>
            <person name="Aklujkar M."/>
            <person name="Lovley D."/>
            <person name="Richardson P."/>
        </authorList>
    </citation>
    <scope>NUCLEOTIDE SEQUENCE [LARGE SCALE GENOMIC DNA]</scope>
    <source>
        <strain>ATCC BAA-1134 / JCM 13001 / Rf4</strain>
    </source>
</reference>
<dbReference type="EC" id="5.3.1.23" evidence="1"/>
<dbReference type="EMBL" id="CP000698">
    <property type="protein sequence ID" value="ABQ28465.1"/>
    <property type="molecule type" value="Genomic_DNA"/>
</dbReference>
<dbReference type="RefSeq" id="WP_011941095.1">
    <property type="nucleotide sequence ID" value="NC_009483.1"/>
</dbReference>
<dbReference type="SMR" id="A5G9J7"/>
<dbReference type="STRING" id="351605.Gura_4322"/>
<dbReference type="KEGG" id="gur:Gura_4322"/>
<dbReference type="HOGENOM" id="CLU_016218_1_2_7"/>
<dbReference type="OrthoDB" id="9803436at2"/>
<dbReference type="UniPathway" id="UPA00904">
    <property type="reaction ID" value="UER00874"/>
</dbReference>
<dbReference type="Proteomes" id="UP000006695">
    <property type="component" value="Chromosome"/>
</dbReference>
<dbReference type="GO" id="GO:0046523">
    <property type="term" value="F:S-methyl-5-thioribose-1-phosphate isomerase activity"/>
    <property type="evidence" value="ECO:0007669"/>
    <property type="project" value="UniProtKB-UniRule"/>
</dbReference>
<dbReference type="GO" id="GO:0019509">
    <property type="term" value="P:L-methionine salvage from methylthioadenosine"/>
    <property type="evidence" value="ECO:0007669"/>
    <property type="project" value="UniProtKB-UniRule"/>
</dbReference>
<dbReference type="FunFam" id="1.20.120.420:FF:000001">
    <property type="entry name" value="Methylthioribose-1-phosphate isomerase"/>
    <property type="match status" value="1"/>
</dbReference>
<dbReference type="FunFam" id="3.40.50.10470:FF:000010">
    <property type="entry name" value="Methylthioribose-1-phosphate isomerase"/>
    <property type="match status" value="1"/>
</dbReference>
<dbReference type="Gene3D" id="1.20.120.420">
    <property type="entry name" value="translation initiation factor eif-2b, domain 1"/>
    <property type="match status" value="1"/>
</dbReference>
<dbReference type="Gene3D" id="3.40.50.10470">
    <property type="entry name" value="Translation initiation factor eif-2b, domain 2"/>
    <property type="match status" value="1"/>
</dbReference>
<dbReference type="HAMAP" id="MF_01678">
    <property type="entry name" value="Salvage_MtnA"/>
    <property type="match status" value="1"/>
</dbReference>
<dbReference type="InterPro" id="IPR000649">
    <property type="entry name" value="IF-2B-related"/>
</dbReference>
<dbReference type="InterPro" id="IPR005251">
    <property type="entry name" value="IF-M1Pi"/>
</dbReference>
<dbReference type="InterPro" id="IPR042529">
    <property type="entry name" value="IF_2B-like_C"/>
</dbReference>
<dbReference type="InterPro" id="IPR011559">
    <property type="entry name" value="Initiation_fac_2B_a/b/d"/>
</dbReference>
<dbReference type="InterPro" id="IPR027363">
    <property type="entry name" value="M1Pi_N"/>
</dbReference>
<dbReference type="InterPro" id="IPR037171">
    <property type="entry name" value="NagB/RpiA_transferase-like"/>
</dbReference>
<dbReference type="NCBIfam" id="TIGR00524">
    <property type="entry name" value="eIF-2B_rel"/>
    <property type="match status" value="1"/>
</dbReference>
<dbReference type="NCBIfam" id="NF004326">
    <property type="entry name" value="PRK05720.1"/>
    <property type="match status" value="1"/>
</dbReference>
<dbReference type="NCBIfam" id="TIGR00512">
    <property type="entry name" value="salvage_mtnA"/>
    <property type="match status" value="1"/>
</dbReference>
<dbReference type="PANTHER" id="PTHR43475">
    <property type="entry name" value="METHYLTHIORIBOSE-1-PHOSPHATE ISOMERASE"/>
    <property type="match status" value="1"/>
</dbReference>
<dbReference type="PANTHER" id="PTHR43475:SF1">
    <property type="entry name" value="METHYLTHIORIBOSE-1-PHOSPHATE ISOMERASE"/>
    <property type="match status" value="1"/>
</dbReference>
<dbReference type="Pfam" id="PF01008">
    <property type="entry name" value="IF-2B"/>
    <property type="match status" value="1"/>
</dbReference>
<dbReference type="SUPFAM" id="SSF100950">
    <property type="entry name" value="NagB/RpiA/CoA transferase-like"/>
    <property type="match status" value="1"/>
</dbReference>
<name>MTNA_GEOUR</name>
<keyword id="KW-0028">Amino-acid biosynthesis</keyword>
<keyword id="KW-0413">Isomerase</keyword>
<keyword id="KW-0486">Methionine biosynthesis</keyword>
<keyword id="KW-1185">Reference proteome</keyword>
<proteinExistence type="inferred from homology"/>
<gene>
    <name evidence="1" type="primary">mtnA</name>
    <name type="ordered locus">Gura_4322</name>
</gene>
<feature type="chain" id="PRO_0000357190" description="Methylthioribose-1-phosphate isomerase">
    <location>
        <begin position="1"/>
        <end position="346"/>
    </location>
</feature>
<feature type="active site" description="Proton donor" evidence="1">
    <location>
        <position position="237"/>
    </location>
</feature>
<feature type="binding site" evidence="1">
    <location>
        <begin position="46"/>
        <end position="48"/>
    </location>
    <ligand>
        <name>substrate</name>
    </ligand>
</feature>
<feature type="binding site" evidence="1">
    <location>
        <position position="89"/>
    </location>
    <ligand>
        <name>substrate</name>
    </ligand>
</feature>
<feature type="binding site" evidence="1">
    <location>
        <position position="196"/>
    </location>
    <ligand>
        <name>substrate</name>
    </ligand>
</feature>
<feature type="binding site" evidence="1">
    <location>
        <begin position="247"/>
        <end position="248"/>
    </location>
    <ligand>
        <name>substrate</name>
    </ligand>
</feature>
<feature type="site" description="Transition state stabilizer" evidence="1">
    <location>
        <position position="157"/>
    </location>
</feature>
<protein>
    <recommendedName>
        <fullName evidence="1">Methylthioribose-1-phosphate isomerase</fullName>
        <shortName evidence="1">M1Pi</shortName>
        <shortName evidence="1">MTR-1-P isomerase</shortName>
        <ecNumber evidence="1">5.3.1.23</ecNumber>
    </recommendedName>
    <alternativeName>
        <fullName evidence="1">S-methyl-5-thioribose-1-phosphate isomerase</fullName>
    </alternativeName>
</protein>
<organism>
    <name type="scientific">Geotalea uraniireducens (strain Rf4)</name>
    <name type="common">Geobacter uraniireducens</name>
    <dbReference type="NCBI Taxonomy" id="351605"/>
    <lineage>
        <taxon>Bacteria</taxon>
        <taxon>Pseudomonadati</taxon>
        <taxon>Thermodesulfobacteriota</taxon>
        <taxon>Desulfuromonadia</taxon>
        <taxon>Geobacterales</taxon>
        <taxon>Geobacteraceae</taxon>
        <taxon>Geotalea</taxon>
    </lineage>
</organism>
<sequence length="346" mass="37985">MSFRTIEWRDNKVVMIDQTRLPGEEVYNEYTDFQSVAEAIRGMIIRGAPAIGVAAAMGIALGAREIIADTHESFFRQLDNVCNVMARTRPTAVNLFWAIERMKRVAESHRDKDLNSIREILKAEAIRIEEEDLEICRAIGRNGAPLIKEGATILTHCNAGGLATAGYGTALGVIRAAHEAGKRIQVFADETRPWLQGARLTSWELMKDGIPVTLISDNMAGYFMRKGEIDVCVVGADRIAANGDTANKIGTYSVAVLAKENKIPFYVAAPVSTLDLSLKSGEDIPIEERHSREVTHLQGLPVAPEGVKVRNPAFDVTPARYIAGIITEKGVVRGDYEKELRALVGR</sequence>